<feature type="initiator methionine" description="Removed" evidence="16 18">
    <location>
        <position position="1"/>
    </location>
</feature>
<feature type="chain" id="PRO_0000218536" description="Gamma-adducin">
    <location>
        <begin position="2"/>
        <end position="706"/>
    </location>
</feature>
<feature type="region of interest" description="Disordered" evidence="4">
    <location>
        <begin position="1"/>
        <end position="20"/>
    </location>
</feature>
<feature type="region of interest" description="Disordered" evidence="4">
    <location>
        <begin position="471"/>
        <end position="497"/>
    </location>
</feature>
<feature type="region of interest" description="Disordered" evidence="4">
    <location>
        <begin position="535"/>
        <end position="555"/>
    </location>
</feature>
<feature type="region of interest" description="Disordered" evidence="4">
    <location>
        <begin position="575"/>
        <end position="610"/>
    </location>
</feature>
<feature type="region of interest" description="Disordered" evidence="4">
    <location>
        <begin position="666"/>
        <end position="706"/>
    </location>
</feature>
<feature type="region of interest" description="Interaction with calmodulin" evidence="3">
    <location>
        <begin position="684"/>
        <end position="701"/>
    </location>
</feature>
<feature type="compositionally biased region" description="Polar residues" evidence="4">
    <location>
        <begin position="1"/>
        <end position="10"/>
    </location>
</feature>
<feature type="compositionally biased region" description="Low complexity" evidence="4">
    <location>
        <begin position="589"/>
        <end position="602"/>
    </location>
</feature>
<feature type="compositionally biased region" description="Basic residues" evidence="4">
    <location>
        <begin position="682"/>
        <end position="706"/>
    </location>
</feature>
<feature type="site" description="Cleavage by asparagine endopeptidase (AEP)" evidence="2">
    <location>
        <position position="357"/>
    </location>
</feature>
<feature type="modified residue" description="N-acetylserine" evidence="16 18">
    <location>
        <position position="2"/>
    </location>
</feature>
<feature type="modified residue" description="Phosphoserine" evidence="14 18 20">
    <location>
        <position position="42"/>
    </location>
</feature>
<feature type="modified residue" description="Phosphoserine" evidence="15 20 21">
    <location>
        <position position="64"/>
    </location>
</feature>
<feature type="modified residue" description="Phosphoserine" evidence="17">
    <location>
        <position position="402"/>
    </location>
</feature>
<feature type="modified residue" description="Phosphoserine" evidence="2">
    <location>
        <position position="414"/>
    </location>
</feature>
<feature type="modified residue" description="Phosphoserine" evidence="15 17">
    <location>
        <position position="423"/>
    </location>
</feature>
<feature type="modified residue" description="Phosphoserine" evidence="15 20">
    <location>
        <position position="442"/>
    </location>
</feature>
<feature type="modified residue" description="Phosphoserine" evidence="20">
    <location>
        <position position="461"/>
    </location>
</feature>
<feature type="modified residue" description="Phosphoserine" evidence="2">
    <location>
        <position position="585"/>
    </location>
</feature>
<feature type="modified residue" description="Phosphoserine" evidence="2">
    <location>
        <position position="590"/>
    </location>
</feature>
<feature type="modified residue" description="Phosphoserine" evidence="13 15 18 20">
    <location>
        <position position="673"/>
    </location>
</feature>
<feature type="modified residue" description="Phosphoserine" evidence="15 18 19 20">
    <location>
        <position position="677"/>
    </location>
</feature>
<feature type="modified residue" description="Phosphoserine" evidence="2">
    <location>
        <position position="679"/>
    </location>
</feature>
<feature type="modified residue" description="Phosphoserine" evidence="15 17 19 20">
    <location>
        <position position="681"/>
    </location>
</feature>
<feature type="modified residue" description="Phosphoserine" evidence="20">
    <location>
        <position position="683"/>
    </location>
</feature>
<feature type="cross-link" description="Glycyl lysine isopeptide (Lys-Gly) (interchain with G-Cter in SUMO2)" evidence="22">
    <location>
        <position position="484"/>
    </location>
</feature>
<feature type="splice variant" id="VSP_000188" description="In isoform 1." evidence="9 10 11">
    <location>
        <begin position="576"/>
        <end position="607"/>
    </location>
</feature>
<feature type="sequence variant" id="VAR_076996" description="In CPSQ3; decreased actin capping activity; increased fibroblast proliferation and migration; decreased colocalization with alpha subunit ADD1; dbSNP:rs564185858." evidence="6">
    <original>G</original>
    <variation>D</variation>
    <location>
        <position position="367"/>
    </location>
</feature>
<feature type="sequence conflict" description="In Ref. 1; BAA23783." evidence="12" ref="1">
    <original>FN</original>
    <variation>SS</variation>
    <location>
        <begin position="49"/>
        <end position="50"/>
    </location>
</feature>
<feature type="sequence conflict" description="In Ref. 1; BAA23783." evidence="12" ref="1">
    <original>Q</original>
    <variation>R</variation>
    <location>
        <position position="60"/>
    </location>
</feature>
<feature type="sequence conflict" description="In Ref. 2; AAB17126." evidence="12" ref="2">
    <original>Q</original>
    <variation>P</variation>
    <location>
        <position position="362"/>
    </location>
</feature>
<feature type="sequence conflict" description="In Ref. 2; AAB17126." evidence="12" ref="2">
    <original>V</original>
    <variation>M</variation>
    <location>
        <position position="420"/>
    </location>
</feature>
<feature type="sequence conflict" description="In Ref. 1; BAA23783." evidence="12" ref="1">
    <original>P</original>
    <variation>L</variation>
    <location>
        <position position="421"/>
    </location>
</feature>
<feature type="sequence conflict" description="In Ref. 2; AAB17126." evidence="12" ref="2">
    <original>KYMAQRQQ</original>
    <variation>QIHGTRGNK</variation>
    <location>
        <begin position="426"/>
        <end position="433"/>
    </location>
</feature>
<feature type="sequence conflict" description="In Ref. 2; AAB17126." evidence="12" ref="2">
    <original>K</original>
    <variation>Q</variation>
    <location>
        <position position="484"/>
    </location>
</feature>
<evidence type="ECO:0000250" key="1">
    <source>
        <dbReference type="UniProtKB" id="Q62847"/>
    </source>
</evidence>
<evidence type="ECO:0000250" key="2">
    <source>
        <dbReference type="UniProtKB" id="Q9QYB5"/>
    </source>
</evidence>
<evidence type="ECO:0000255" key="3"/>
<evidence type="ECO:0000256" key="4">
    <source>
        <dbReference type="SAM" id="MobiDB-lite"/>
    </source>
</evidence>
<evidence type="ECO:0000269" key="5">
    <source>
    </source>
</evidence>
<evidence type="ECO:0000269" key="6">
    <source>
    </source>
</evidence>
<evidence type="ECO:0000269" key="7">
    <source>
    </source>
</evidence>
<evidence type="ECO:0000269" key="8">
    <source>
    </source>
</evidence>
<evidence type="ECO:0000303" key="9">
    <source>
    </source>
</evidence>
<evidence type="ECO:0000303" key="10">
    <source>
    </source>
</evidence>
<evidence type="ECO:0000303" key="11">
    <source ref="2"/>
</evidence>
<evidence type="ECO:0000305" key="12"/>
<evidence type="ECO:0007744" key="13">
    <source>
    </source>
</evidence>
<evidence type="ECO:0007744" key="14">
    <source>
    </source>
</evidence>
<evidence type="ECO:0007744" key="15">
    <source>
    </source>
</evidence>
<evidence type="ECO:0007744" key="16">
    <source>
    </source>
</evidence>
<evidence type="ECO:0007744" key="17">
    <source>
    </source>
</evidence>
<evidence type="ECO:0007744" key="18">
    <source>
    </source>
</evidence>
<evidence type="ECO:0007744" key="19">
    <source>
    </source>
</evidence>
<evidence type="ECO:0007744" key="20">
    <source>
    </source>
</evidence>
<evidence type="ECO:0007744" key="21">
    <source>
    </source>
</evidence>
<evidence type="ECO:0007744" key="22">
    <source>
    </source>
</evidence>
<protein>
    <recommendedName>
        <fullName>Gamma-adducin</fullName>
    </recommendedName>
    <alternativeName>
        <fullName>Adducin-like protein 70</fullName>
    </alternativeName>
</protein>
<name>ADDG_HUMAN</name>
<keyword id="KW-0007">Acetylation</keyword>
<keyword id="KW-0009">Actin-binding</keyword>
<keyword id="KW-0025">Alternative splicing</keyword>
<keyword id="KW-0112">Calmodulin-binding</keyword>
<keyword id="KW-1003">Cell membrane</keyword>
<keyword id="KW-0963">Cytoplasm</keyword>
<keyword id="KW-0206">Cytoskeleton</keyword>
<keyword id="KW-0225">Disease variant</keyword>
<keyword id="KW-1017">Isopeptide bond</keyword>
<keyword id="KW-0472">Membrane</keyword>
<keyword id="KW-0597">Phosphoprotein</keyword>
<keyword id="KW-1267">Proteomics identification</keyword>
<keyword id="KW-1185">Reference proteome</keyword>
<keyword id="KW-0832">Ubl conjugation</keyword>
<organism>
    <name type="scientific">Homo sapiens</name>
    <name type="common">Human</name>
    <dbReference type="NCBI Taxonomy" id="9606"/>
    <lineage>
        <taxon>Eukaryota</taxon>
        <taxon>Metazoa</taxon>
        <taxon>Chordata</taxon>
        <taxon>Craniata</taxon>
        <taxon>Vertebrata</taxon>
        <taxon>Euteleostomi</taxon>
        <taxon>Mammalia</taxon>
        <taxon>Eutheria</taxon>
        <taxon>Euarchontoglires</taxon>
        <taxon>Primates</taxon>
        <taxon>Haplorrhini</taxon>
        <taxon>Catarrhini</taxon>
        <taxon>Hominidae</taxon>
        <taxon>Homo</taxon>
    </lineage>
</organism>
<sequence length="706" mass="79155">MSSDASQGVITTPPPPSMPHKERYFDRINENDPEYIRERNMSPDLRQDFNMMEQRKRVTQILQSPAFREDLECLIQEQMKKGHNPTGLLALQQIADYIMANSFSGFSSPPLSLGMVTPINDLPGADTSSYVKGEKLTRCKLASLYRLVDLFGWAHLANTYISVRISKEQDHIIIIPRGLSFSEATASNLVKVNIIGEVVDQGSTNLKIDHTGFSPHAAIYSTRPDVKCVIHIHTLATAAVSSMKCGILPISQESLLLGDVAYYDYQGSLEEQEERIQLQKVLGPSCKVLVLRNHGVVALGETLEEAFHYIFNVQLACEIQVQALAGAGGVDNLHVLDFQKYKAFTYTVAASGGGGVNMGSHQKWKVGEIEFEGLMRTLDNLGYRTGYAYRHPLIREKPRHKSDVEIPATVTAFSFEDDTVPLSPLKYMAQRQQREKTRWLNSPNTYMKVNVPEESRNGETSPRTKITWMKAEDSSKVSGGTPIKIEDPNQFVPLNTNPNEVLEKRNKIREQNRYDLKTAGPQSQLLAGIVVDKPPSTMQFEDDDHGPPAPPNPFSHLTEGELEEYKRTIERKQQGLEDAEQELLSDDASSVSQIQSQTQSPQNVPEKLEENHELFSKSFISMEVPVMVVNGKDDMHDVEDELAKRVSRLSTSTTIENIEITIKSPEKIEEVLSPEGSPSKSPSKKKKKFRTPSFLKKNKKKEKVEA</sequence>
<comment type="function">
    <text evidence="1 2 6 12">Membrane-cytoskeleton-associated protein that promotes the assembly of the spectrin-actin network. Plays a role in actin filament capping (PubMed:23836506). Binds to calmodulin (Probable). Involved in myogenic reactivity of the renal afferent arteriole (Af-art), renal interlobular arteries and middle cerebral artery (MCA) to increased perfusion pressure. Involved in regulation of potassium channels in the vascular smooth muscle cells (VSMCs) of the Af-art and MCA ex vivo. Involved in regulation of glomerular capillary pressure, glomerular filtration rate (GFR) and glomerular nephrin expression in response to hypertension. Involved in renal blood flow (RBF) autoregulation. Plays a role in podocyte structure and function. Regulates globular monomer actin (G-actin) and filamentous polymer actin (F-actin) ratios in the primary podocytes affecting actin cytoskeleton organization. Regulates expression of synaptopodin, RhoA, Rac1 and CDC42 in the renal cortex and the primary podocytes. Regulates expression of nephrin in the glomeruli and in the primary podocytes, expression of nephrin and podocinin in the renal cortex, and expression of focal adhesion proteins integrin alpha-3 and integrin beta-1 in the glomeruli. Involved in cell migration and cell adhesion of podocytes, and in podocyte foot process effacement. Regulates expression of profibrotics markers MMP2, MMP9, TGF beta-1, tubular tight junction protein E-cadherin, and mesenchymal markers vimentin and alpha-SMA (By similarity). Promotes the growth of neurites (By similarity).</text>
</comment>
<comment type="subunit">
    <text>Heterodimer of an alpha and a gamma subunit.</text>
</comment>
<comment type="subcellular location">
    <subcellularLocation>
        <location evidence="1">Cytoplasm</location>
        <location evidence="1">Cytoskeleton</location>
    </subcellularLocation>
    <subcellularLocation>
        <location evidence="1">Cell membrane</location>
        <topology>Peripheral membrane protein</topology>
        <orientation>Cytoplasmic side</orientation>
    </subcellularLocation>
    <subcellularLocation>
        <location evidence="2">Cytoplasm</location>
    </subcellularLocation>
    <text evidence="2">Full-length protein and the cleavage fragment 358-706 localize mainly to the cytoplasm, while cleavage fragment 1-357 translocates from the cytoplasm to the nucleus.</text>
</comment>
<comment type="alternative products">
    <event type="alternative splicing"/>
    <isoform>
        <id>Q9UEY8-1</id>
        <name>2</name>
        <name>Long</name>
        <sequence type="displayed"/>
    </isoform>
    <isoform>
        <id>Q9UEY8-2</id>
        <name>1</name>
        <name>Short</name>
        <sequence type="described" ref="VSP_000188"/>
    </isoform>
    <text>Additional isoforms seem to exist.</text>
</comment>
<comment type="tissue specificity">
    <molecule>Isoform 1</molecule>
    <text evidence="8">ubiquitously expressed.</text>
</comment>
<comment type="tissue specificity">
    <text evidence="7">Cleavage fragment 1-357 is abundantly expressed in the brain of patients with Alzheimer disease (AD), but hardly detectable in age-matched control individuals (at protein level).</text>
</comment>
<comment type="domain">
    <text>Comprised of three regions: a N-terminal protease-resistant globular head region, a short connecting subdomain, and a protease-sensitive tail region.</text>
</comment>
<comment type="PTM">
    <text evidence="5">Sumoylated.</text>
</comment>
<comment type="PTM">
    <text evidence="2">Proteolytically cleaved by asparagine endopeptidase (AEP) into 2 fragments. Overexpression of the 1-357 fragment induces neuronal apoptosis, and overexpression of either 1-357 or 358-706 fragment increases the degeneration of dendritic spines. Overexpression of the 1-357 fragment impairs neurite outgrowth by downregulating the expression of Rac2, and induces synaptic dysfunction and cognitive impairments in tau P301S transgenic mice, a mouse model for Alzheimer disease (AD).</text>
</comment>
<comment type="disease" evidence="6">
    <disease id="DI-04750">
        <name>Cerebral palsy, spastic quadriplegic 3</name>
        <acronym>CPSQ3</acronym>
        <description>A form of cerebral palsy, a group of non-progressive disorders of movement and/or posture resulting from defects in the developing central nervous system. CPSQ3 is an autosomal recessive neurodevelopmental disorder characterized by variable spasticity and cognitive impairment.</description>
        <dbReference type="MIM" id="617008"/>
    </disease>
    <text>The disease is caused by variants affecting the gene represented in this entry.</text>
</comment>
<comment type="similarity">
    <text evidence="12">Belongs to the aldolase class II family. Adducin subfamily.</text>
</comment>
<comment type="online information" name="Atlas of Genetics and Cytogenetics in Oncology and Haematology">
    <link uri="https://atlasgeneticsoncology.org/gene/520/ADD3"/>
</comment>
<gene>
    <name type="primary">ADD3</name>
    <name type="synonym">ADDL</name>
</gene>
<proteinExistence type="evidence at protein level"/>
<dbReference type="EMBL" id="D67031">
    <property type="protein sequence ID" value="BAA23783.1"/>
    <property type="molecule type" value="mRNA"/>
</dbReference>
<dbReference type="EMBL" id="U37122">
    <property type="protein sequence ID" value="AAB17126.1"/>
    <property type="molecule type" value="mRNA"/>
</dbReference>
<dbReference type="EMBL" id="Y14372">
    <property type="protein sequence ID" value="CAB51805.1"/>
    <property type="molecule type" value="Genomic_DNA"/>
</dbReference>
<dbReference type="EMBL" id="Y14373">
    <property type="protein sequence ID" value="CAB51805.1"/>
    <property type="status" value="JOINED"/>
    <property type="molecule type" value="Genomic_DNA"/>
</dbReference>
<dbReference type="EMBL" id="Y14374">
    <property type="protein sequence ID" value="CAB51805.1"/>
    <property type="status" value="JOINED"/>
    <property type="molecule type" value="Genomic_DNA"/>
</dbReference>
<dbReference type="EMBL" id="Y14375">
    <property type="protein sequence ID" value="CAB51805.1"/>
    <property type="status" value="JOINED"/>
    <property type="molecule type" value="Genomic_DNA"/>
</dbReference>
<dbReference type="EMBL" id="Y14376">
    <property type="protein sequence ID" value="CAB51805.1"/>
    <property type="status" value="JOINED"/>
    <property type="molecule type" value="Genomic_DNA"/>
</dbReference>
<dbReference type="EMBL" id="Y14377">
    <property type="protein sequence ID" value="CAB51805.1"/>
    <property type="status" value="JOINED"/>
    <property type="molecule type" value="Genomic_DNA"/>
</dbReference>
<dbReference type="EMBL" id="Y14378">
    <property type="protein sequence ID" value="CAB51805.1"/>
    <property type="status" value="JOINED"/>
    <property type="molecule type" value="Genomic_DNA"/>
</dbReference>
<dbReference type="EMBL" id="Y14379">
    <property type="protein sequence ID" value="CAB51805.1"/>
    <property type="status" value="JOINED"/>
    <property type="molecule type" value="Genomic_DNA"/>
</dbReference>
<dbReference type="EMBL" id="Y14380">
    <property type="protein sequence ID" value="CAB51805.1"/>
    <property type="status" value="JOINED"/>
    <property type="molecule type" value="Genomic_DNA"/>
</dbReference>
<dbReference type="EMBL" id="Y14381">
    <property type="protein sequence ID" value="CAB51805.1"/>
    <property type="status" value="JOINED"/>
    <property type="molecule type" value="Genomic_DNA"/>
</dbReference>
<dbReference type="EMBL" id="Y14382">
    <property type="protein sequence ID" value="CAB51805.1"/>
    <property type="status" value="JOINED"/>
    <property type="molecule type" value="Genomic_DNA"/>
</dbReference>
<dbReference type="EMBL" id="Y14383">
    <property type="protein sequence ID" value="CAB51805.1"/>
    <property type="status" value="JOINED"/>
    <property type="molecule type" value="Genomic_DNA"/>
</dbReference>
<dbReference type="EMBL" id="Y14384">
    <property type="protein sequence ID" value="CAB51805.1"/>
    <property type="status" value="JOINED"/>
    <property type="molecule type" value="Genomic_DNA"/>
</dbReference>
<dbReference type="EMBL" id="Y14372">
    <property type="protein sequence ID" value="CAB51806.1"/>
    <property type="molecule type" value="Genomic_DNA"/>
</dbReference>
<dbReference type="EMBL" id="Y14373">
    <property type="protein sequence ID" value="CAB51806.1"/>
    <property type="status" value="JOINED"/>
    <property type="molecule type" value="Genomic_DNA"/>
</dbReference>
<dbReference type="EMBL" id="Y14374">
    <property type="protein sequence ID" value="CAB51806.1"/>
    <property type="status" value="JOINED"/>
    <property type="molecule type" value="Genomic_DNA"/>
</dbReference>
<dbReference type="EMBL" id="Y14375">
    <property type="protein sequence ID" value="CAB51806.1"/>
    <property type="status" value="JOINED"/>
    <property type="molecule type" value="Genomic_DNA"/>
</dbReference>
<dbReference type="EMBL" id="Y14376">
    <property type="protein sequence ID" value="CAB51806.1"/>
    <property type="status" value="JOINED"/>
    <property type="molecule type" value="Genomic_DNA"/>
</dbReference>
<dbReference type="EMBL" id="Y14377">
    <property type="protein sequence ID" value="CAB51806.1"/>
    <property type="status" value="JOINED"/>
    <property type="molecule type" value="Genomic_DNA"/>
</dbReference>
<dbReference type="EMBL" id="Y14378">
    <property type="protein sequence ID" value="CAB51806.1"/>
    <property type="status" value="JOINED"/>
    <property type="molecule type" value="Genomic_DNA"/>
</dbReference>
<dbReference type="EMBL" id="Y14379">
    <property type="protein sequence ID" value="CAB51806.1"/>
    <property type="status" value="JOINED"/>
    <property type="molecule type" value="Genomic_DNA"/>
</dbReference>
<dbReference type="EMBL" id="Y14380">
    <property type="protein sequence ID" value="CAB51806.1"/>
    <property type="status" value="JOINED"/>
    <property type="molecule type" value="Genomic_DNA"/>
</dbReference>
<dbReference type="EMBL" id="Y14381">
    <property type="protein sequence ID" value="CAB51806.1"/>
    <property type="status" value="JOINED"/>
    <property type="molecule type" value="Genomic_DNA"/>
</dbReference>
<dbReference type="EMBL" id="Y14382">
    <property type="protein sequence ID" value="CAB51806.1"/>
    <property type="status" value="JOINED"/>
    <property type="molecule type" value="Genomic_DNA"/>
</dbReference>
<dbReference type="EMBL" id="Y14384">
    <property type="protein sequence ID" value="CAB51806.1"/>
    <property type="status" value="JOINED"/>
    <property type="molecule type" value="Genomic_DNA"/>
</dbReference>
<dbReference type="EMBL" id="BX647403">
    <property type="protein sequence ID" value="CAI46048.1"/>
    <property type="molecule type" value="mRNA"/>
</dbReference>
<dbReference type="EMBL" id="AL590628">
    <property type="status" value="NOT_ANNOTATED_CDS"/>
    <property type="molecule type" value="Genomic_DNA"/>
</dbReference>
<dbReference type="EMBL" id="CH471066">
    <property type="protein sequence ID" value="EAW49573.1"/>
    <property type="molecule type" value="Genomic_DNA"/>
</dbReference>
<dbReference type="EMBL" id="CH471066">
    <property type="protein sequence ID" value="EAW49574.1"/>
    <property type="molecule type" value="Genomic_DNA"/>
</dbReference>
<dbReference type="EMBL" id="BC062559">
    <property type="protein sequence ID" value="AAH62559.1"/>
    <property type="molecule type" value="mRNA"/>
</dbReference>
<dbReference type="CCDS" id="CCDS7561.1">
    <molecule id="Q9UEY8-1"/>
</dbReference>
<dbReference type="CCDS" id="CCDS7562.1">
    <molecule id="Q9UEY8-2"/>
</dbReference>
<dbReference type="PIR" id="JC7164">
    <property type="entry name" value="JC7164"/>
</dbReference>
<dbReference type="RefSeq" id="NP_001112.2">
    <molecule id="Q9UEY8-2"/>
    <property type="nucleotide sequence ID" value="NM_001121.3"/>
</dbReference>
<dbReference type="RefSeq" id="NP_001307520.1">
    <molecule id="Q9UEY8-1"/>
    <property type="nucleotide sequence ID" value="NM_001320591.2"/>
</dbReference>
<dbReference type="RefSeq" id="NP_001307521.1">
    <molecule id="Q9UEY8-1"/>
    <property type="nucleotide sequence ID" value="NM_001320592.2"/>
</dbReference>
<dbReference type="RefSeq" id="NP_001307522.1">
    <molecule id="Q9UEY8-1"/>
    <property type="nucleotide sequence ID" value="NM_001320593.2"/>
</dbReference>
<dbReference type="RefSeq" id="NP_001307523.1">
    <property type="nucleotide sequence ID" value="NM_001320594.1"/>
</dbReference>
<dbReference type="RefSeq" id="NP_058432.1">
    <molecule id="Q9UEY8-1"/>
    <property type="nucleotide sequence ID" value="NM_016824.5"/>
</dbReference>
<dbReference type="RefSeq" id="NP_063968.1">
    <molecule id="Q9UEY8-2"/>
    <property type="nucleotide sequence ID" value="NM_019903.5"/>
</dbReference>
<dbReference type="RefSeq" id="XP_024303562.1">
    <molecule id="Q9UEY8-1"/>
    <property type="nucleotide sequence ID" value="XM_024447794.2"/>
</dbReference>
<dbReference type="RefSeq" id="XP_024303563.1">
    <molecule id="Q9UEY8-1"/>
    <property type="nucleotide sequence ID" value="XM_024447795.1"/>
</dbReference>
<dbReference type="RefSeq" id="XP_024303564.1">
    <molecule id="Q9UEY8-1"/>
    <property type="nucleotide sequence ID" value="XM_024447796.2"/>
</dbReference>
<dbReference type="RefSeq" id="XP_024303565.1">
    <molecule id="Q9UEY8-1"/>
    <property type="nucleotide sequence ID" value="XM_024447797.2"/>
</dbReference>
<dbReference type="RefSeq" id="XP_024303566.1">
    <molecule id="Q9UEY8-1"/>
    <property type="nucleotide sequence ID" value="XM_024447798.1"/>
</dbReference>
<dbReference type="RefSeq" id="XP_024303567.1">
    <molecule id="Q9UEY8-1"/>
    <property type="nucleotide sequence ID" value="XM_024447799.2"/>
</dbReference>
<dbReference type="RefSeq" id="XP_024303568.1">
    <molecule id="Q9UEY8-1"/>
    <property type="nucleotide sequence ID" value="XM_024447800.2"/>
</dbReference>
<dbReference type="RefSeq" id="XP_024303569.1">
    <molecule id="Q9UEY8-1"/>
    <property type="nucleotide sequence ID" value="XM_024447801.1"/>
</dbReference>
<dbReference type="RefSeq" id="XP_024303570.1">
    <molecule id="Q9UEY8-1"/>
    <property type="nucleotide sequence ID" value="XM_024447802.2"/>
</dbReference>
<dbReference type="RefSeq" id="XP_024303571.1">
    <molecule id="Q9UEY8-2"/>
    <property type="nucleotide sequence ID" value="XM_024447803.2"/>
</dbReference>
<dbReference type="RefSeq" id="XP_024303572.1">
    <molecule id="Q9UEY8-2"/>
    <property type="nucleotide sequence ID" value="XM_024447804.1"/>
</dbReference>
<dbReference type="RefSeq" id="XP_024303573.1">
    <molecule id="Q9UEY8-2"/>
    <property type="nucleotide sequence ID" value="XM_024447805.2"/>
</dbReference>
<dbReference type="RefSeq" id="XP_024303574.1">
    <molecule id="Q9UEY8-2"/>
    <property type="nucleotide sequence ID" value="XM_024447806.2"/>
</dbReference>
<dbReference type="RefSeq" id="XP_024303575.1">
    <molecule id="Q9UEY8-2"/>
    <property type="nucleotide sequence ID" value="XM_024447807.1"/>
</dbReference>
<dbReference type="RefSeq" id="XP_047280543.1">
    <molecule id="Q9UEY8-1"/>
    <property type="nucleotide sequence ID" value="XM_047424587.1"/>
</dbReference>
<dbReference type="RefSeq" id="XP_047280544.1">
    <molecule id="Q9UEY8-1"/>
    <property type="nucleotide sequence ID" value="XM_047424588.1"/>
</dbReference>
<dbReference type="RefSeq" id="XP_047280545.1">
    <molecule id="Q9UEY8-1"/>
    <property type="nucleotide sequence ID" value="XM_047424589.1"/>
</dbReference>
<dbReference type="RefSeq" id="XP_047280546.1">
    <molecule id="Q9UEY8-1"/>
    <property type="nucleotide sequence ID" value="XM_047424590.1"/>
</dbReference>
<dbReference type="RefSeq" id="XP_047280547.1">
    <molecule id="Q9UEY8-1"/>
    <property type="nucleotide sequence ID" value="XM_047424591.1"/>
</dbReference>
<dbReference type="RefSeq" id="XP_047280548.1">
    <molecule id="Q9UEY8-2"/>
    <property type="nucleotide sequence ID" value="XM_047424592.1"/>
</dbReference>
<dbReference type="RefSeq" id="XP_047280549.1">
    <molecule id="Q9UEY8-2"/>
    <property type="nucleotide sequence ID" value="XM_047424593.1"/>
</dbReference>
<dbReference type="RefSeq" id="XP_047280550.1">
    <molecule id="Q9UEY8-2"/>
    <property type="nucleotide sequence ID" value="XM_047424594.1"/>
</dbReference>
<dbReference type="RefSeq" id="XP_047280551.1">
    <molecule id="Q9UEY8-2"/>
    <property type="nucleotide sequence ID" value="XM_047424595.1"/>
</dbReference>
<dbReference type="RefSeq" id="XP_054220742.1">
    <molecule id="Q9UEY8-1"/>
    <property type="nucleotide sequence ID" value="XM_054364767.1"/>
</dbReference>
<dbReference type="RefSeq" id="XP_054220743.1">
    <molecule id="Q9UEY8-1"/>
    <property type="nucleotide sequence ID" value="XM_054364768.1"/>
</dbReference>
<dbReference type="RefSeq" id="XP_054220744.1">
    <molecule id="Q9UEY8-1"/>
    <property type="nucleotide sequence ID" value="XM_054364769.1"/>
</dbReference>
<dbReference type="RefSeq" id="XP_054220745.1">
    <molecule id="Q9UEY8-1"/>
    <property type="nucleotide sequence ID" value="XM_054364770.1"/>
</dbReference>
<dbReference type="RefSeq" id="XP_054220746.1">
    <molecule id="Q9UEY8-1"/>
    <property type="nucleotide sequence ID" value="XM_054364771.1"/>
</dbReference>
<dbReference type="RefSeq" id="XP_054220747.1">
    <molecule id="Q9UEY8-1"/>
    <property type="nucleotide sequence ID" value="XM_054364772.1"/>
</dbReference>
<dbReference type="RefSeq" id="XP_054220748.1">
    <molecule id="Q9UEY8-1"/>
    <property type="nucleotide sequence ID" value="XM_054364773.1"/>
</dbReference>
<dbReference type="RefSeq" id="XP_054220749.1">
    <molecule id="Q9UEY8-1"/>
    <property type="nucleotide sequence ID" value="XM_054364774.1"/>
</dbReference>
<dbReference type="RefSeq" id="XP_054220750.1">
    <molecule id="Q9UEY8-1"/>
    <property type="nucleotide sequence ID" value="XM_054364775.1"/>
</dbReference>
<dbReference type="RefSeq" id="XP_054220751.1">
    <molecule id="Q9UEY8-1"/>
    <property type="nucleotide sequence ID" value="XM_054364776.1"/>
</dbReference>
<dbReference type="RefSeq" id="XP_054220752.1">
    <molecule id="Q9UEY8-1"/>
    <property type="nucleotide sequence ID" value="XM_054364777.1"/>
</dbReference>
<dbReference type="RefSeq" id="XP_054220753.1">
    <molecule id="Q9UEY8-1"/>
    <property type="nucleotide sequence ID" value="XM_054364778.1"/>
</dbReference>
<dbReference type="RefSeq" id="XP_054220754.1">
    <molecule id="Q9UEY8-1"/>
    <property type="nucleotide sequence ID" value="XM_054364779.1"/>
</dbReference>
<dbReference type="RefSeq" id="XP_054220755.1">
    <molecule id="Q9UEY8-1"/>
    <property type="nucleotide sequence ID" value="XM_054364780.1"/>
</dbReference>
<dbReference type="RefSeq" id="XP_054220756.1">
    <molecule id="Q9UEY8-2"/>
    <property type="nucleotide sequence ID" value="XM_054364781.1"/>
</dbReference>
<dbReference type="RefSeq" id="XP_054220757.1">
    <molecule id="Q9UEY8-2"/>
    <property type="nucleotide sequence ID" value="XM_054364782.1"/>
</dbReference>
<dbReference type="RefSeq" id="XP_054220758.1">
    <molecule id="Q9UEY8-2"/>
    <property type="nucleotide sequence ID" value="XM_054364783.1"/>
</dbReference>
<dbReference type="RefSeq" id="XP_054220759.1">
    <molecule id="Q9UEY8-2"/>
    <property type="nucleotide sequence ID" value="XM_054364784.1"/>
</dbReference>
<dbReference type="RefSeq" id="XP_054220760.1">
    <molecule id="Q9UEY8-2"/>
    <property type="nucleotide sequence ID" value="XM_054364785.1"/>
</dbReference>
<dbReference type="RefSeq" id="XP_054220761.1">
    <molecule id="Q9UEY8-2"/>
    <property type="nucleotide sequence ID" value="XM_054364786.1"/>
</dbReference>
<dbReference type="RefSeq" id="XP_054220762.1">
    <molecule id="Q9UEY8-2"/>
    <property type="nucleotide sequence ID" value="XM_054364787.1"/>
</dbReference>
<dbReference type="RefSeq" id="XP_054220763.1">
    <molecule id="Q9UEY8-2"/>
    <property type="nucleotide sequence ID" value="XM_054364788.1"/>
</dbReference>
<dbReference type="RefSeq" id="XP_054220764.1">
    <molecule id="Q9UEY8-2"/>
    <property type="nucleotide sequence ID" value="XM_054364789.1"/>
</dbReference>
<dbReference type="SMR" id="Q9UEY8"/>
<dbReference type="BioGRID" id="106633">
    <property type="interactions" value="169"/>
</dbReference>
<dbReference type="ComplexPortal" id="CPX-2643">
    <property type="entry name" value="Adducin complex, alpha-gamma variant"/>
</dbReference>
<dbReference type="FunCoup" id="Q9UEY8">
    <property type="interactions" value="1492"/>
</dbReference>
<dbReference type="IntAct" id="Q9UEY8">
    <property type="interactions" value="66"/>
</dbReference>
<dbReference type="MINT" id="Q9UEY8"/>
<dbReference type="STRING" id="9606.ENSP00000348381"/>
<dbReference type="GlyCosmos" id="Q9UEY8">
    <property type="glycosylation" value="2 sites, 1 glycan"/>
</dbReference>
<dbReference type="GlyGen" id="Q9UEY8">
    <property type="glycosylation" value="3 sites, 1 O-linked glycan (3 sites)"/>
</dbReference>
<dbReference type="iPTMnet" id="Q9UEY8"/>
<dbReference type="MetOSite" id="Q9UEY8"/>
<dbReference type="PhosphoSitePlus" id="Q9UEY8"/>
<dbReference type="SwissPalm" id="Q9UEY8"/>
<dbReference type="BioMuta" id="ADD3"/>
<dbReference type="DMDM" id="12643881"/>
<dbReference type="jPOST" id="Q9UEY8"/>
<dbReference type="MassIVE" id="Q9UEY8"/>
<dbReference type="PaxDb" id="9606-ENSP00000348381"/>
<dbReference type="PeptideAtlas" id="Q9UEY8"/>
<dbReference type="ProteomicsDB" id="84160">
    <molecule id="Q9UEY8-1"/>
</dbReference>
<dbReference type="ProteomicsDB" id="84161">
    <molecule id="Q9UEY8-2"/>
</dbReference>
<dbReference type="Pumba" id="Q9UEY8"/>
<dbReference type="Antibodypedia" id="4067">
    <property type="antibodies" value="206 antibodies from 32 providers"/>
</dbReference>
<dbReference type="DNASU" id="120"/>
<dbReference type="Ensembl" id="ENST00000277900.12">
    <molecule id="Q9UEY8-2"/>
    <property type="protein sequence ID" value="ENSP00000277900.8"/>
    <property type="gene ID" value="ENSG00000148700.15"/>
</dbReference>
<dbReference type="Ensembl" id="ENST00000356080.9">
    <molecule id="Q9UEY8-1"/>
    <property type="protein sequence ID" value="ENSP00000348381.4"/>
    <property type="gene ID" value="ENSG00000148700.15"/>
</dbReference>
<dbReference type="Ensembl" id="ENST00000360162.7">
    <molecule id="Q9UEY8-2"/>
    <property type="protein sequence ID" value="ENSP00000353286.3"/>
    <property type="gene ID" value="ENSG00000148700.15"/>
</dbReference>
<dbReference type="GeneID" id="120"/>
<dbReference type="KEGG" id="hsa:120"/>
<dbReference type="MANE-Select" id="ENST00000356080.9">
    <property type="protein sequence ID" value="ENSP00000348381.4"/>
    <property type="RefSeq nucleotide sequence ID" value="NM_016824.5"/>
    <property type="RefSeq protein sequence ID" value="NP_058432.1"/>
</dbReference>
<dbReference type="UCSC" id="uc001kys.5">
    <molecule id="Q9UEY8-1"/>
    <property type="organism name" value="human"/>
</dbReference>
<dbReference type="AGR" id="HGNC:245"/>
<dbReference type="CTD" id="120"/>
<dbReference type="DisGeNET" id="120"/>
<dbReference type="GeneCards" id="ADD3"/>
<dbReference type="HGNC" id="HGNC:245">
    <property type="gene designation" value="ADD3"/>
</dbReference>
<dbReference type="HPA" id="ENSG00000148700">
    <property type="expression patterns" value="Low tissue specificity"/>
</dbReference>
<dbReference type="MalaCards" id="ADD3"/>
<dbReference type="MIM" id="601568">
    <property type="type" value="gene"/>
</dbReference>
<dbReference type="MIM" id="617008">
    <property type="type" value="phenotype"/>
</dbReference>
<dbReference type="neXtProt" id="NX_Q9UEY8"/>
<dbReference type="OpenTargets" id="ENSG00000148700"/>
<dbReference type="Orphanet" id="210141">
    <property type="disease" value="Inherited congenital spastic tetraplegia"/>
</dbReference>
<dbReference type="PharmGKB" id="PA24567"/>
<dbReference type="VEuPathDB" id="HostDB:ENSG00000148700"/>
<dbReference type="eggNOG" id="KOG3699">
    <property type="taxonomic scope" value="Eukaryota"/>
</dbReference>
<dbReference type="GeneTree" id="ENSGT00940000155257"/>
<dbReference type="HOGENOM" id="CLU_006033_9_2_1"/>
<dbReference type="InParanoid" id="Q9UEY8"/>
<dbReference type="OMA" id="XVRISKE"/>
<dbReference type="OrthoDB" id="3238794at2759"/>
<dbReference type="PAN-GO" id="Q9UEY8">
    <property type="GO annotations" value="5 GO annotations based on evolutionary models"/>
</dbReference>
<dbReference type="PhylomeDB" id="Q9UEY8"/>
<dbReference type="TreeFam" id="TF313003"/>
<dbReference type="PathwayCommons" id="Q9UEY8"/>
<dbReference type="Reactome" id="R-HSA-5223345">
    <property type="pathway name" value="Miscellaneous transport and binding events"/>
</dbReference>
<dbReference type="Reactome" id="R-HSA-9013405">
    <property type="pathway name" value="RHOD GTPase cycle"/>
</dbReference>
<dbReference type="Reactome" id="R-HSA-9035034">
    <property type="pathway name" value="RHOF GTPase cycle"/>
</dbReference>
<dbReference type="SignaLink" id="Q9UEY8"/>
<dbReference type="SIGNOR" id="Q9UEY8"/>
<dbReference type="BioGRID-ORCS" id="120">
    <property type="hits" value="16 hits in 1164 CRISPR screens"/>
</dbReference>
<dbReference type="CD-CODE" id="FB4E32DD">
    <property type="entry name" value="Presynaptic clusters and postsynaptic densities"/>
</dbReference>
<dbReference type="ChiTaRS" id="ADD3">
    <property type="organism name" value="human"/>
</dbReference>
<dbReference type="GeneWiki" id="ADD3"/>
<dbReference type="GenomeRNAi" id="120"/>
<dbReference type="Pharos" id="Q9UEY8">
    <property type="development level" value="Tbio"/>
</dbReference>
<dbReference type="PRO" id="PR:Q9UEY8"/>
<dbReference type="Proteomes" id="UP000005640">
    <property type="component" value="Chromosome 10"/>
</dbReference>
<dbReference type="RNAct" id="Q9UEY8">
    <property type="molecule type" value="protein"/>
</dbReference>
<dbReference type="Bgee" id="ENSG00000148700">
    <property type="expression patterns" value="Expressed in secondary oocyte and 213 other cell types or tissues"/>
</dbReference>
<dbReference type="ExpressionAtlas" id="Q9UEY8">
    <property type="expression patterns" value="baseline and differential"/>
</dbReference>
<dbReference type="GO" id="GO:0005903">
    <property type="term" value="C:brush border"/>
    <property type="evidence" value="ECO:0007669"/>
    <property type="project" value="Ensembl"/>
</dbReference>
<dbReference type="GO" id="GO:0005938">
    <property type="term" value="C:cell cortex"/>
    <property type="evidence" value="ECO:0007669"/>
    <property type="project" value="Ensembl"/>
</dbReference>
<dbReference type="GO" id="GO:0005911">
    <property type="term" value="C:cell-cell junction"/>
    <property type="evidence" value="ECO:0007669"/>
    <property type="project" value="Ensembl"/>
</dbReference>
<dbReference type="GO" id="GO:0000794">
    <property type="term" value="C:condensed nuclear chromosome"/>
    <property type="evidence" value="ECO:0007669"/>
    <property type="project" value="Ensembl"/>
</dbReference>
<dbReference type="GO" id="GO:0005856">
    <property type="term" value="C:cytoskeleton"/>
    <property type="evidence" value="ECO:0000318"/>
    <property type="project" value="GO_Central"/>
</dbReference>
<dbReference type="GO" id="GO:0005829">
    <property type="term" value="C:cytosol"/>
    <property type="evidence" value="ECO:0000304"/>
    <property type="project" value="Reactome"/>
</dbReference>
<dbReference type="GO" id="GO:0016020">
    <property type="term" value="C:membrane"/>
    <property type="evidence" value="ECO:0000304"/>
    <property type="project" value="ProtInc"/>
</dbReference>
<dbReference type="GO" id="GO:0005886">
    <property type="term" value="C:plasma membrane"/>
    <property type="evidence" value="ECO:0000314"/>
    <property type="project" value="HPA"/>
</dbReference>
<dbReference type="GO" id="GO:0014069">
    <property type="term" value="C:postsynaptic density"/>
    <property type="evidence" value="ECO:0000318"/>
    <property type="project" value="GO_Central"/>
</dbReference>
<dbReference type="GO" id="GO:0051015">
    <property type="term" value="F:actin filament binding"/>
    <property type="evidence" value="ECO:0000318"/>
    <property type="project" value="GO_Central"/>
</dbReference>
<dbReference type="GO" id="GO:0005516">
    <property type="term" value="F:calmodulin binding"/>
    <property type="evidence" value="ECO:0007669"/>
    <property type="project" value="UniProtKB-KW"/>
</dbReference>
<dbReference type="GO" id="GO:0005080">
    <property type="term" value="F:protein kinase C binding"/>
    <property type="evidence" value="ECO:0007669"/>
    <property type="project" value="Ensembl"/>
</dbReference>
<dbReference type="GO" id="GO:0005200">
    <property type="term" value="F:structural constituent of cytoskeleton"/>
    <property type="evidence" value="ECO:0000304"/>
    <property type="project" value="ProtInc"/>
</dbReference>
<dbReference type="GO" id="GO:0051016">
    <property type="term" value="P:barbed-end actin filament capping"/>
    <property type="evidence" value="ECO:0000318"/>
    <property type="project" value="GO_Central"/>
</dbReference>
<dbReference type="GO" id="GO:0051495">
    <property type="term" value="P:positive regulation of cytoskeleton organization"/>
    <property type="evidence" value="ECO:0007669"/>
    <property type="project" value="Ensembl"/>
</dbReference>
<dbReference type="GO" id="GO:0045907">
    <property type="term" value="P:positive regulation of vasoconstriction"/>
    <property type="evidence" value="ECO:0007669"/>
    <property type="project" value="Ensembl"/>
</dbReference>
<dbReference type="GO" id="GO:0009410">
    <property type="term" value="P:response to xenobiotic stimulus"/>
    <property type="evidence" value="ECO:0007669"/>
    <property type="project" value="Ensembl"/>
</dbReference>
<dbReference type="FunFam" id="3.40.225.10:FF:000004">
    <property type="entry name" value="gamma-adducin isoform X1"/>
    <property type="match status" value="1"/>
</dbReference>
<dbReference type="Gene3D" id="3.40.225.10">
    <property type="entry name" value="Class II aldolase/adducin N-terminal domain"/>
    <property type="match status" value="1"/>
</dbReference>
<dbReference type="InterPro" id="IPR051017">
    <property type="entry name" value="Aldolase-II_Adducin_sf"/>
</dbReference>
<dbReference type="InterPro" id="IPR001303">
    <property type="entry name" value="Aldolase_II/adducin_N"/>
</dbReference>
<dbReference type="InterPro" id="IPR036409">
    <property type="entry name" value="Aldolase_II/adducin_N_sf"/>
</dbReference>
<dbReference type="PANTHER" id="PTHR10672">
    <property type="entry name" value="ADDUCIN"/>
    <property type="match status" value="1"/>
</dbReference>
<dbReference type="PANTHER" id="PTHR10672:SF5">
    <property type="entry name" value="GAMMA-ADDUCIN"/>
    <property type="match status" value="1"/>
</dbReference>
<dbReference type="Pfam" id="PF00596">
    <property type="entry name" value="Aldolase_II"/>
    <property type="match status" value="1"/>
</dbReference>
<dbReference type="SMART" id="SM01007">
    <property type="entry name" value="Aldolase_II"/>
    <property type="match status" value="1"/>
</dbReference>
<dbReference type="SUPFAM" id="SSF53639">
    <property type="entry name" value="AraD/HMP-PK domain-like"/>
    <property type="match status" value="1"/>
</dbReference>
<reference key="1">
    <citation type="journal article" date="1996" name="Cytogenet. Cell Genet.">
        <title>Cloning, expression and chromosome mapping of adducin-like 70 (ADDL), a human cDNA highly homologous to human erythrocyte adducin.</title>
        <authorList>
            <person name="Katagiri T."/>
            <person name="Ozaki K."/>
            <person name="Fujiwara T."/>
            <person name="Shimizu F."/>
            <person name="Kawai A."/>
            <person name="Okuno S."/>
            <person name="Suzuki M."/>
            <person name="Nakamura Y."/>
            <person name="Takahashi E."/>
            <person name="Hirai Y."/>
        </authorList>
    </citation>
    <scope>NUCLEOTIDE SEQUENCE [MRNA] (ISOFORM 1)</scope>
    <scope>TISSUE SPECIFICITY</scope>
</reference>
<reference key="2">
    <citation type="submission" date="1995-09" db="EMBL/GenBank/DDBJ databases">
        <title>Cloning in the gamma quadrant.</title>
        <authorList>
            <person name="Moorthy S."/>
            <person name="Bennett V."/>
        </authorList>
    </citation>
    <scope>NUCLEOTIDE SEQUENCE [MRNA] (ISOFORM 1)</scope>
</reference>
<reference key="3">
    <citation type="journal article" date="1999" name="Biochem. Biophys. Res. Commun.">
        <title>Genomic organization of the human gamma adducin gene.</title>
        <authorList>
            <person name="Citterio L."/>
            <person name="Azzani T."/>
            <person name="Duga S."/>
            <person name="Bianchi G."/>
        </authorList>
    </citation>
    <scope>NUCLEOTIDE SEQUENCE [GENOMIC DNA]</scope>
    <scope>ALTERNATIVE SPLICING</scope>
</reference>
<reference key="4">
    <citation type="journal article" date="2007" name="BMC Genomics">
        <title>The full-ORF clone resource of the German cDNA consortium.</title>
        <authorList>
            <person name="Bechtel S."/>
            <person name="Rosenfelder H."/>
            <person name="Duda A."/>
            <person name="Schmidt C.P."/>
            <person name="Ernst U."/>
            <person name="Wellenreuther R."/>
            <person name="Mehrle A."/>
            <person name="Schuster C."/>
            <person name="Bahr A."/>
            <person name="Bloecker H."/>
            <person name="Heubner D."/>
            <person name="Hoerlein A."/>
            <person name="Michel G."/>
            <person name="Wedler H."/>
            <person name="Koehrer K."/>
            <person name="Ottenwaelder B."/>
            <person name="Poustka A."/>
            <person name="Wiemann S."/>
            <person name="Schupp I."/>
        </authorList>
    </citation>
    <scope>NUCLEOTIDE SEQUENCE [LARGE SCALE MRNA] (ISOFORM 1)</scope>
    <source>
        <tissue>Endometrium</tissue>
    </source>
</reference>
<reference key="5">
    <citation type="journal article" date="2004" name="Nature">
        <title>The DNA sequence and comparative analysis of human chromosome 10.</title>
        <authorList>
            <person name="Deloukas P."/>
            <person name="Earthrowl M.E."/>
            <person name="Grafham D.V."/>
            <person name="Rubenfield M."/>
            <person name="French L."/>
            <person name="Steward C.A."/>
            <person name="Sims S.K."/>
            <person name="Jones M.C."/>
            <person name="Searle S."/>
            <person name="Scott C."/>
            <person name="Howe K."/>
            <person name="Hunt S.E."/>
            <person name="Andrews T.D."/>
            <person name="Gilbert J.G.R."/>
            <person name="Swarbreck D."/>
            <person name="Ashurst J.L."/>
            <person name="Taylor A."/>
            <person name="Battles J."/>
            <person name="Bird C.P."/>
            <person name="Ainscough R."/>
            <person name="Almeida J.P."/>
            <person name="Ashwell R.I.S."/>
            <person name="Ambrose K.D."/>
            <person name="Babbage A.K."/>
            <person name="Bagguley C.L."/>
            <person name="Bailey J."/>
            <person name="Banerjee R."/>
            <person name="Bates K."/>
            <person name="Beasley H."/>
            <person name="Bray-Allen S."/>
            <person name="Brown A.J."/>
            <person name="Brown J.Y."/>
            <person name="Burford D.C."/>
            <person name="Burrill W."/>
            <person name="Burton J."/>
            <person name="Cahill P."/>
            <person name="Camire D."/>
            <person name="Carter N.P."/>
            <person name="Chapman J.C."/>
            <person name="Clark S.Y."/>
            <person name="Clarke G."/>
            <person name="Clee C.M."/>
            <person name="Clegg S."/>
            <person name="Corby N."/>
            <person name="Coulson A."/>
            <person name="Dhami P."/>
            <person name="Dutta I."/>
            <person name="Dunn M."/>
            <person name="Faulkner L."/>
            <person name="Frankish A."/>
            <person name="Frankland J.A."/>
            <person name="Garner P."/>
            <person name="Garnett J."/>
            <person name="Gribble S."/>
            <person name="Griffiths C."/>
            <person name="Grocock R."/>
            <person name="Gustafson E."/>
            <person name="Hammond S."/>
            <person name="Harley J.L."/>
            <person name="Hart E."/>
            <person name="Heath P.D."/>
            <person name="Ho T.P."/>
            <person name="Hopkins B."/>
            <person name="Horne J."/>
            <person name="Howden P.J."/>
            <person name="Huckle E."/>
            <person name="Hynds C."/>
            <person name="Johnson C."/>
            <person name="Johnson D."/>
            <person name="Kana A."/>
            <person name="Kay M."/>
            <person name="Kimberley A.M."/>
            <person name="Kershaw J.K."/>
            <person name="Kokkinaki M."/>
            <person name="Laird G.K."/>
            <person name="Lawlor S."/>
            <person name="Lee H.M."/>
            <person name="Leongamornlert D.A."/>
            <person name="Laird G."/>
            <person name="Lloyd C."/>
            <person name="Lloyd D.M."/>
            <person name="Loveland J."/>
            <person name="Lovell J."/>
            <person name="McLaren S."/>
            <person name="McLay K.E."/>
            <person name="McMurray A."/>
            <person name="Mashreghi-Mohammadi M."/>
            <person name="Matthews L."/>
            <person name="Milne S."/>
            <person name="Nickerson T."/>
            <person name="Nguyen M."/>
            <person name="Overton-Larty E."/>
            <person name="Palmer S.A."/>
            <person name="Pearce A.V."/>
            <person name="Peck A.I."/>
            <person name="Pelan S."/>
            <person name="Phillimore B."/>
            <person name="Porter K."/>
            <person name="Rice C.M."/>
            <person name="Rogosin A."/>
            <person name="Ross M.T."/>
            <person name="Sarafidou T."/>
            <person name="Sehra H.K."/>
            <person name="Shownkeen R."/>
            <person name="Skuce C.D."/>
            <person name="Smith M."/>
            <person name="Standring L."/>
            <person name="Sycamore N."/>
            <person name="Tester J."/>
            <person name="Thorpe A."/>
            <person name="Torcasso W."/>
            <person name="Tracey A."/>
            <person name="Tromans A."/>
            <person name="Tsolas J."/>
            <person name="Wall M."/>
            <person name="Walsh J."/>
            <person name="Wang H."/>
            <person name="Weinstock K."/>
            <person name="West A.P."/>
            <person name="Willey D.L."/>
            <person name="Whitehead S.L."/>
            <person name="Wilming L."/>
            <person name="Wray P.W."/>
            <person name="Young L."/>
            <person name="Chen Y."/>
            <person name="Lovering R.C."/>
            <person name="Moschonas N.K."/>
            <person name="Siebert R."/>
            <person name="Fechtel K."/>
            <person name="Bentley D."/>
            <person name="Durbin R.M."/>
            <person name="Hubbard T."/>
            <person name="Doucette-Stamm L."/>
            <person name="Beck S."/>
            <person name="Smith D.R."/>
            <person name="Rogers J."/>
        </authorList>
    </citation>
    <scope>NUCLEOTIDE SEQUENCE [LARGE SCALE GENOMIC DNA]</scope>
</reference>
<reference key="6">
    <citation type="submission" date="2005-09" db="EMBL/GenBank/DDBJ databases">
        <authorList>
            <person name="Mural R.J."/>
            <person name="Istrail S."/>
            <person name="Sutton G.G."/>
            <person name="Florea L."/>
            <person name="Halpern A.L."/>
            <person name="Mobarry C.M."/>
            <person name="Lippert R."/>
            <person name="Walenz B."/>
            <person name="Shatkay H."/>
            <person name="Dew I."/>
            <person name="Miller J.R."/>
            <person name="Flanigan M.J."/>
            <person name="Edwards N.J."/>
            <person name="Bolanos R."/>
            <person name="Fasulo D."/>
            <person name="Halldorsson B.V."/>
            <person name="Hannenhalli S."/>
            <person name="Turner R."/>
            <person name="Yooseph S."/>
            <person name="Lu F."/>
            <person name="Nusskern D.R."/>
            <person name="Shue B.C."/>
            <person name="Zheng X.H."/>
            <person name="Zhong F."/>
            <person name="Delcher A.L."/>
            <person name="Huson D.H."/>
            <person name="Kravitz S.A."/>
            <person name="Mouchard L."/>
            <person name="Reinert K."/>
            <person name="Remington K.A."/>
            <person name="Clark A.G."/>
            <person name="Waterman M.S."/>
            <person name="Eichler E.E."/>
            <person name="Adams M.D."/>
            <person name="Hunkapiller M.W."/>
            <person name="Myers E.W."/>
            <person name="Venter J.C."/>
        </authorList>
    </citation>
    <scope>NUCLEOTIDE SEQUENCE [LARGE SCALE GENOMIC DNA]</scope>
</reference>
<reference key="7">
    <citation type="journal article" date="2004" name="Genome Res.">
        <title>The status, quality, and expansion of the NIH full-length cDNA project: the Mammalian Gene Collection (MGC).</title>
        <authorList>
            <consortium name="The MGC Project Team"/>
        </authorList>
    </citation>
    <scope>NUCLEOTIDE SEQUENCE [LARGE SCALE MRNA] (ISOFORM 2)</scope>
    <source>
        <tissue>Ovary</tissue>
    </source>
</reference>
<reference key="8">
    <citation type="journal article" date="2005" name="J. Biol. Chem.">
        <title>Systematic identification and analysis of mammalian small ubiquitin-like modifier substrates.</title>
        <authorList>
            <person name="Gocke C.B."/>
            <person name="Yu H."/>
            <person name="Kang J."/>
        </authorList>
    </citation>
    <scope>SUMOYLATION</scope>
</reference>
<reference key="9">
    <citation type="journal article" date="2006" name="Cell">
        <title>Global, in vivo, and site-specific phosphorylation dynamics in signaling networks.</title>
        <authorList>
            <person name="Olsen J.V."/>
            <person name="Blagoev B."/>
            <person name="Gnad F."/>
            <person name="Macek B."/>
            <person name="Kumar C."/>
            <person name="Mortensen P."/>
            <person name="Mann M."/>
        </authorList>
    </citation>
    <scope>PHOSPHORYLATION [LARGE SCALE ANALYSIS] AT SER-673</scope>
    <scope>IDENTIFICATION BY MASS SPECTROMETRY [LARGE SCALE ANALYSIS]</scope>
    <source>
        <tissue>Cervix carcinoma</tissue>
    </source>
</reference>
<reference key="10">
    <citation type="journal article" date="2008" name="J. Proteome Res.">
        <title>Phosphoproteome of resting human platelets.</title>
        <authorList>
            <person name="Zahedi R.P."/>
            <person name="Lewandrowski U."/>
            <person name="Wiesner J."/>
            <person name="Wortelkamp S."/>
            <person name="Moebius J."/>
            <person name="Schuetz C."/>
            <person name="Walter U."/>
            <person name="Gambaryan S."/>
            <person name="Sickmann A."/>
        </authorList>
    </citation>
    <scope>PHOSPHORYLATION [LARGE SCALE ANALYSIS] AT SER-42</scope>
    <scope>IDENTIFICATION BY MASS SPECTROMETRY [LARGE SCALE ANALYSIS]</scope>
    <source>
        <tissue>Platelet</tissue>
    </source>
</reference>
<reference key="11">
    <citation type="journal article" date="2008" name="Proc. Natl. Acad. Sci. U.S.A.">
        <title>A quantitative atlas of mitotic phosphorylation.</title>
        <authorList>
            <person name="Dephoure N."/>
            <person name="Zhou C."/>
            <person name="Villen J."/>
            <person name="Beausoleil S.A."/>
            <person name="Bakalarski C.E."/>
            <person name="Elledge S.J."/>
            <person name="Gygi S.P."/>
        </authorList>
    </citation>
    <scope>PHOSPHORYLATION [LARGE SCALE ANALYSIS] AT SER-64; SER-423; SER-442; SER-673; SER-677 AND SER-681</scope>
    <scope>IDENTIFICATION BY MASS SPECTROMETRY [LARGE SCALE ANALYSIS]</scope>
    <source>
        <tissue>Cervix carcinoma</tissue>
    </source>
</reference>
<reference key="12">
    <citation type="journal article" date="2009" name="Anal. Chem.">
        <title>Lys-N and trypsin cover complementary parts of the phosphoproteome in a refined SCX-based approach.</title>
        <authorList>
            <person name="Gauci S."/>
            <person name="Helbig A.O."/>
            <person name="Slijper M."/>
            <person name="Krijgsveld J."/>
            <person name="Heck A.J."/>
            <person name="Mohammed S."/>
        </authorList>
    </citation>
    <scope>ACETYLATION [LARGE SCALE ANALYSIS] AT SER-2</scope>
    <scope>CLEAVAGE OF INITIATOR METHIONINE [LARGE SCALE ANALYSIS]</scope>
    <scope>IDENTIFICATION BY MASS SPECTROMETRY [LARGE SCALE ANALYSIS]</scope>
</reference>
<reference key="13">
    <citation type="journal article" date="2009" name="Sci. Signal.">
        <title>Quantitative phosphoproteomic analysis of T cell receptor signaling reveals system-wide modulation of protein-protein interactions.</title>
        <authorList>
            <person name="Mayya V."/>
            <person name="Lundgren D.H."/>
            <person name="Hwang S.-I."/>
            <person name="Rezaul K."/>
            <person name="Wu L."/>
            <person name="Eng J.K."/>
            <person name="Rodionov V."/>
            <person name="Han D.K."/>
        </authorList>
    </citation>
    <scope>PHOSPHORYLATION [LARGE SCALE ANALYSIS] AT SER-402; SER-423 AND SER-681</scope>
    <scope>IDENTIFICATION BY MASS SPECTROMETRY [LARGE SCALE ANALYSIS]</scope>
    <source>
        <tissue>Leukemic T-cell</tissue>
    </source>
</reference>
<reference key="14">
    <citation type="journal article" date="2010" name="Sci. Signal.">
        <title>Quantitative phosphoproteomics reveals widespread full phosphorylation site occupancy during mitosis.</title>
        <authorList>
            <person name="Olsen J.V."/>
            <person name="Vermeulen M."/>
            <person name="Santamaria A."/>
            <person name="Kumar C."/>
            <person name="Miller M.L."/>
            <person name="Jensen L.J."/>
            <person name="Gnad F."/>
            <person name="Cox J."/>
            <person name="Jensen T.S."/>
            <person name="Nigg E.A."/>
            <person name="Brunak S."/>
            <person name="Mann M."/>
        </authorList>
    </citation>
    <scope>ACETYLATION [LARGE SCALE ANALYSIS] AT SER-2</scope>
    <scope>PHOSPHORYLATION [LARGE SCALE ANALYSIS] AT SER-42; SER-673 AND SER-677</scope>
    <scope>CLEAVAGE OF INITIATOR METHIONINE [LARGE SCALE ANALYSIS]</scope>
    <scope>IDENTIFICATION BY MASS SPECTROMETRY [LARGE SCALE ANALYSIS]</scope>
    <source>
        <tissue>Cervix carcinoma</tissue>
    </source>
</reference>
<reference key="15">
    <citation type="journal article" date="2011" name="BMC Syst. Biol.">
        <title>Initial characterization of the human central proteome.</title>
        <authorList>
            <person name="Burkard T.R."/>
            <person name="Planyavsky M."/>
            <person name="Kaupe I."/>
            <person name="Breitwieser F.P."/>
            <person name="Buerckstuemmer T."/>
            <person name="Bennett K.L."/>
            <person name="Superti-Furga G."/>
            <person name="Colinge J."/>
        </authorList>
    </citation>
    <scope>IDENTIFICATION BY MASS SPECTROMETRY [LARGE SCALE ANALYSIS]</scope>
</reference>
<reference key="16">
    <citation type="journal article" date="2011" name="Sci. Signal.">
        <title>System-wide temporal characterization of the proteome and phosphoproteome of human embryonic stem cell differentiation.</title>
        <authorList>
            <person name="Rigbolt K.T."/>
            <person name="Prokhorova T.A."/>
            <person name="Akimov V."/>
            <person name="Henningsen J."/>
            <person name="Johansen P.T."/>
            <person name="Kratchmarova I."/>
            <person name="Kassem M."/>
            <person name="Mann M."/>
            <person name="Olsen J.V."/>
            <person name="Blagoev B."/>
        </authorList>
    </citation>
    <scope>PHOSPHORYLATION [LARGE SCALE ANALYSIS] AT SER-677 AND SER-681</scope>
    <scope>IDENTIFICATION BY MASS SPECTROMETRY [LARGE SCALE ANALYSIS]</scope>
</reference>
<reference key="17">
    <citation type="journal article" date="2013" name="Ann. Neurol.">
        <title>Mutations in gamma adducin are associated with inherited cerebral palsy.</title>
        <authorList>
            <person name="Kruer M.C."/>
            <person name="Jepperson T."/>
            <person name="Dutta S."/>
            <person name="Steiner R.D."/>
            <person name="Cottenie E."/>
            <person name="Sanford L."/>
            <person name="Merkens M."/>
            <person name="Russman B.S."/>
            <person name="Blasco P.A."/>
            <person name="Fan G."/>
            <person name="Pollock J."/>
            <person name="Green S."/>
            <person name="Woltjer R.L."/>
            <person name="Mooney C."/>
            <person name="Kretzschmar D."/>
            <person name="Paisan-Ruiz C."/>
            <person name="Houlden H."/>
        </authorList>
    </citation>
    <scope>INVOLVEMENT IN CPSQ3</scope>
    <scope>VARIANT CPSQ3 ASP-367</scope>
    <scope>CHARACTERIZATION OF VARIANT CPSQ3 ASP-367</scope>
    <scope>FUNCTION</scope>
</reference>
<reference key="18">
    <citation type="journal article" date="2013" name="J. Proteome Res.">
        <title>Toward a comprehensive characterization of a human cancer cell phosphoproteome.</title>
        <authorList>
            <person name="Zhou H."/>
            <person name="Di Palma S."/>
            <person name="Preisinger C."/>
            <person name="Peng M."/>
            <person name="Polat A.N."/>
            <person name="Heck A.J."/>
            <person name="Mohammed S."/>
        </authorList>
    </citation>
    <scope>PHOSPHORYLATION [LARGE SCALE ANALYSIS] AT SER-42; SER-64; SER-442; SER-461; SER-673; SER-677; SER-681 AND SER-683</scope>
    <scope>IDENTIFICATION BY MASS SPECTROMETRY [LARGE SCALE ANALYSIS]</scope>
    <source>
        <tissue>Cervix carcinoma</tissue>
        <tissue>Erythroleukemia</tissue>
    </source>
</reference>
<reference key="19">
    <citation type="journal article" date="2014" name="J. Proteomics">
        <title>An enzyme assisted RP-RPLC approach for in-depth analysis of human liver phosphoproteome.</title>
        <authorList>
            <person name="Bian Y."/>
            <person name="Song C."/>
            <person name="Cheng K."/>
            <person name="Dong M."/>
            <person name="Wang F."/>
            <person name="Huang J."/>
            <person name="Sun D."/>
            <person name="Wang L."/>
            <person name="Ye M."/>
            <person name="Zou H."/>
        </authorList>
    </citation>
    <scope>PHOSPHORYLATION [LARGE SCALE ANALYSIS] AT SER-64</scope>
    <scope>IDENTIFICATION BY MASS SPECTROMETRY [LARGE SCALE ANALYSIS]</scope>
    <source>
        <tissue>Liver</tissue>
    </source>
</reference>
<reference key="20">
    <citation type="journal article" date="2017" name="Nat. Struct. Mol. Biol.">
        <title>Site-specific mapping of the human SUMO proteome reveals co-modification with phosphorylation.</title>
        <authorList>
            <person name="Hendriks I.A."/>
            <person name="Lyon D."/>
            <person name="Young C."/>
            <person name="Jensen L.J."/>
            <person name="Vertegaal A.C."/>
            <person name="Nielsen M.L."/>
        </authorList>
    </citation>
    <scope>SUMOYLATION [LARGE SCALE ANALYSIS] AT LYS-484</scope>
    <scope>IDENTIFICATION BY MASS SPECTROMETRY [LARGE SCALE ANALYSIS]</scope>
</reference>
<reference key="21">
    <citation type="journal article" date="2021" name="Prog. Neurobiol.">
        <title>A gamma-adducin cleavage fragment induces neurite deficits and synaptic dysfunction in Alzheimer's disease.</title>
        <authorList>
            <person name="Xiong M."/>
            <person name="Zou L."/>
            <person name="Meng L."/>
            <person name="Zhang X."/>
            <person name="Tian Y."/>
            <person name="Zhang G."/>
            <person name="Yang J."/>
            <person name="Chen G."/>
            <person name="Xiong J."/>
            <person name="Ye K."/>
            <person name="Zhang Z."/>
        </authorList>
    </citation>
    <scope>TISSUE SPECIFICITY</scope>
</reference>
<accession>Q9UEY8</accession>
<accession>D3DRA8</accession>
<accession>O43243</accession>
<accession>Q5VU09</accession>
<accession>Q92773</accession>
<accession>Q9UEY7</accession>